<feature type="chain" id="PRO_1000096352" description="Phosphoglycerate kinase">
    <location>
        <begin position="1"/>
        <end position="401"/>
    </location>
</feature>
<feature type="binding site" evidence="1">
    <location>
        <begin position="21"/>
        <end position="23"/>
    </location>
    <ligand>
        <name>substrate</name>
    </ligand>
</feature>
<feature type="binding site" evidence="1">
    <location>
        <position position="36"/>
    </location>
    <ligand>
        <name>substrate</name>
    </ligand>
</feature>
<feature type="binding site" evidence="1">
    <location>
        <begin position="59"/>
        <end position="62"/>
    </location>
    <ligand>
        <name>substrate</name>
    </ligand>
</feature>
<feature type="binding site" evidence="1">
    <location>
        <position position="119"/>
    </location>
    <ligand>
        <name>substrate</name>
    </ligand>
</feature>
<feature type="binding site" evidence="1">
    <location>
        <position position="160"/>
    </location>
    <ligand>
        <name>substrate</name>
    </ligand>
</feature>
<feature type="binding site" evidence="1">
    <location>
        <position position="212"/>
    </location>
    <ligand>
        <name>ATP</name>
        <dbReference type="ChEBI" id="CHEBI:30616"/>
    </ligand>
</feature>
<feature type="binding site" evidence="1">
    <location>
        <position position="330"/>
    </location>
    <ligand>
        <name>ATP</name>
        <dbReference type="ChEBI" id="CHEBI:30616"/>
    </ligand>
</feature>
<feature type="binding site" evidence="1">
    <location>
        <begin position="357"/>
        <end position="360"/>
    </location>
    <ligand>
        <name>ATP</name>
        <dbReference type="ChEBI" id="CHEBI:30616"/>
    </ligand>
</feature>
<sequence length="401" mass="42960">MAKLTVEDLPLEGKKVLMRVDFNVPIKDGVVGDDNRIVAALPTIKYVIDHGGRAILFSHLGRIKKEEDKPGLSLRPVAERLSNLLNKPVTFVPVTEGKQLEDAIDNMKNGDVLLVQNTRYEDVKDGEYVKRESGNDPELGKYWASLGDVFVNDAFGTAHRKHASNVGIATNMPGKAAAGYLMEKEIKFLGDAVDNPERPFVAILGGAKVSDKIGVIDNLLDKADKIIIGGGMAYTFYAAKGIKVGNSLVEKDKIDVAKQILDKAGDKLVLPIDNVVADKFNNDADTKVVEGDIDNGWMALDIGPKSVEEFKNVLKDAKTVVWNGPMGVFEMPNFAKGTLEIGKFLGTLTDATTIVGGGDSTAAVKELGVADKLTHISTGGGASLTYLEGNELPGIAAISDK</sequence>
<organism>
    <name type="scientific">Limosilactobacillus reuteri subsp. reuteri (strain JCM 1112)</name>
    <name type="common">Lactobacillus reuteri</name>
    <dbReference type="NCBI Taxonomy" id="557433"/>
    <lineage>
        <taxon>Bacteria</taxon>
        <taxon>Bacillati</taxon>
        <taxon>Bacillota</taxon>
        <taxon>Bacilli</taxon>
        <taxon>Lactobacillales</taxon>
        <taxon>Lactobacillaceae</taxon>
        <taxon>Limosilactobacillus</taxon>
    </lineage>
</organism>
<name>PGK_LIMRJ</name>
<gene>
    <name evidence="1" type="primary">pgk</name>
    <name type="ordered locus">LAR_0382</name>
</gene>
<dbReference type="EC" id="2.7.2.3" evidence="1"/>
<dbReference type="EMBL" id="AP007281">
    <property type="protein sequence ID" value="BAG24898.1"/>
    <property type="molecule type" value="Genomic_DNA"/>
</dbReference>
<dbReference type="RefSeq" id="WP_003667472.1">
    <property type="nucleotide sequence ID" value="NC_010609.1"/>
</dbReference>
<dbReference type="SMR" id="B2G616"/>
<dbReference type="KEGG" id="lrf:LAR_0382"/>
<dbReference type="HOGENOM" id="CLU_025427_0_2_9"/>
<dbReference type="UniPathway" id="UPA00109">
    <property type="reaction ID" value="UER00185"/>
</dbReference>
<dbReference type="GO" id="GO:0005829">
    <property type="term" value="C:cytosol"/>
    <property type="evidence" value="ECO:0007669"/>
    <property type="project" value="TreeGrafter"/>
</dbReference>
<dbReference type="GO" id="GO:0043531">
    <property type="term" value="F:ADP binding"/>
    <property type="evidence" value="ECO:0007669"/>
    <property type="project" value="TreeGrafter"/>
</dbReference>
<dbReference type="GO" id="GO:0005524">
    <property type="term" value="F:ATP binding"/>
    <property type="evidence" value="ECO:0007669"/>
    <property type="project" value="UniProtKB-KW"/>
</dbReference>
<dbReference type="GO" id="GO:0004618">
    <property type="term" value="F:phosphoglycerate kinase activity"/>
    <property type="evidence" value="ECO:0007669"/>
    <property type="project" value="UniProtKB-UniRule"/>
</dbReference>
<dbReference type="GO" id="GO:0006094">
    <property type="term" value="P:gluconeogenesis"/>
    <property type="evidence" value="ECO:0007669"/>
    <property type="project" value="TreeGrafter"/>
</dbReference>
<dbReference type="GO" id="GO:0006096">
    <property type="term" value="P:glycolytic process"/>
    <property type="evidence" value="ECO:0007669"/>
    <property type="project" value="UniProtKB-UniRule"/>
</dbReference>
<dbReference type="CDD" id="cd00318">
    <property type="entry name" value="Phosphoglycerate_kinase"/>
    <property type="match status" value="1"/>
</dbReference>
<dbReference type="FunFam" id="3.40.50.1260:FF:000007">
    <property type="entry name" value="Phosphoglycerate kinase"/>
    <property type="match status" value="1"/>
</dbReference>
<dbReference type="FunFam" id="3.40.50.1260:FF:000008">
    <property type="entry name" value="Phosphoglycerate kinase"/>
    <property type="match status" value="1"/>
</dbReference>
<dbReference type="Gene3D" id="3.40.50.1260">
    <property type="entry name" value="Phosphoglycerate kinase, N-terminal domain"/>
    <property type="match status" value="2"/>
</dbReference>
<dbReference type="HAMAP" id="MF_00145">
    <property type="entry name" value="Phosphoglyc_kinase"/>
    <property type="match status" value="1"/>
</dbReference>
<dbReference type="InterPro" id="IPR001576">
    <property type="entry name" value="Phosphoglycerate_kinase"/>
</dbReference>
<dbReference type="InterPro" id="IPR015911">
    <property type="entry name" value="Phosphoglycerate_kinase_CS"/>
</dbReference>
<dbReference type="InterPro" id="IPR015824">
    <property type="entry name" value="Phosphoglycerate_kinase_N"/>
</dbReference>
<dbReference type="InterPro" id="IPR036043">
    <property type="entry name" value="Phosphoglycerate_kinase_sf"/>
</dbReference>
<dbReference type="PANTHER" id="PTHR11406">
    <property type="entry name" value="PHOSPHOGLYCERATE KINASE"/>
    <property type="match status" value="1"/>
</dbReference>
<dbReference type="PANTHER" id="PTHR11406:SF23">
    <property type="entry name" value="PHOSPHOGLYCERATE KINASE 1, CHLOROPLASTIC-RELATED"/>
    <property type="match status" value="1"/>
</dbReference>
<dbReference type="Pfam" id="PF00162">
    <property type="entry name" value="PGK"/>
    <property type="match status" value="1"/>
</dbReference>
<dbReference type="PIRSF" id="PIRSF000724">
    <property type="entry name" value="Pgk"/>
    <property type="match status" value="1"/>
</dbReference>
<dbReference type="PRINTS" id="PR00477">
    <property type="entry name" value="PHGLYCKINASE"/>
</dbReference>
<dbReference type="SUPFAM" id="SSF53748">
    <property type="entry name" value="Phosphoglycerate kinase"/>
    <property type="match status" value="1"/>
</dbReference>
<dbReference type="PROSITE" id="PS00111">
    <property type="entry name" value="PGLYCERATE_KINASE"/>
    <property type="match status" value="1"/>
</dbReference>
<keyword id="KW-0067">ATP-binding</keyword>
<keyword id="KW-0963">Cytoplasm</keyword>
<keyword id="KW-0324">Glycolysis</keyword>
<keyword id="KW-0418">Kinase</keyword>
<keyword id="KW-0547">Nucleotide-binding</keyword>
<keyword id="KW-0808">Transferase</keyword>
<proteinExistence type="inferred from homology"/>
<reference key="1">
    <citation type="journal article" date="2008" name="DNA Res.">
        <title>Comparative genome analysis of Lactobacillus reuteri and Lactobacillus fermentum reveal a genomic island for reuterin and cobalamin production.</title>
        <authorList>
            <person name="Morita H."/>
            <person name="Toh H."/>
            <person name="Fukuda S."/>
            <person name="Horikawa H."/>
            <person name="Oshima K."/>
            <person name="Suzuki T."/>
            <person name="Murakami M."/>
            <person name="Hisamatsu S."/>
            <person name="Kato Y."/>
            <person name="Takizawa T."/>
            <person name="Fukuoka H."/>
            <person name="Yoshimura T."/>
            <person name="Itoh K."/>
            <person name="O'Sullivan D.J."/>
            <person name="McKay L.L."/>
            <person name="Ohno H."/>
            <person name="Kikuchi J."/>
            <person name="Masaoka T."/>
            <person name="Hattori M."/>
        </authorList>
    </citation>
    <scope>NUCLEOTIDE SEQUENCE [LARGE SCALE GENOMIC DNA]</scope>
    <source>
        <strain>JCM 1112</strain>
    </source>
</reference>
<protein>
    <recommendedName>
        <fullName evidence="1">Phosphoglycerate kinase</fullName>
        <ecNumber evidence="1">2.7.2.3</ecNumber>
    </recommendedName>
</protein>
<evidence type="ECO:0000255" key="1">
    <source>
        <dbReference type="HAMAP-Rule" id="MF_00145"/>
    </source>
</evidence>
<accession>B2G616</accession>
<comment type="catalytic activity">
    <reaction evidence="1">
        <text>(2R)-3-phosphoglycerate + ATP = (2R)-3-phospho-glyceroyl phosphate + ADP</text>
        <dbReference type="Rhea" id="RHEA:14801"/>
        <dbReference type="ChEBI" id="CHEBI:30616"/>
        <dbReference type="ChEBI" id="CHEBI:57604"/>
        <dbReference type="ChEBI" id="CHEBI:58272"/>
        <dbReference type="ChEBI" id="CHEBI:456216"/>
        <dbReference type="EC" id="2.7.2.3"/>
    </reaction>
</comment>
<comment type="pathway">
    <text evidence="1">Carbohydrate degradation; glycolysis; pyruvate from D-glyceraldehyde 3-phosphate: step 2/5.</text>
</comment>
<comment type="subunit">
    <text evidence="1">Monomer.</text>
</comment>
<comment type="subcellular location">
    <subcellularLocation>
        <location evidence="1">Cytoplasm</location>
    </subcellularLocation>
</comment>
<comment type="similarity">
    <text evidence="1">Belongs to the phosphoglycerate kinase family.</text>
</comment>